<feature type="chain" id="PRO_0000126232" description="Large ribosomal subunit protein bL36">
    <location>
        <begin position="1"/>
        <end position="46"/>
    </location>
</feature>
<dbReference type="EMBL" id="BX571859">
    <property type="protein sequence ID" value="CAE12330.1"/>
    <property type="molecule type" value="Genomic_DNA"/>
</dbReference>
<dbReference type="RefSeq" id="WP_011144448.1">
    <property type="nucleotide sequence ID" value="NC_005126.1"/>
</dbReference>
<dbReference type="SMR" id="Q7NA99"/>
<dbReference type="STRING" id="243265.plu0035"/>
<dbReference type="GeneID" id="48846335"/>
<dbReference type="KEGG" id="plu:plu0035"/>
<dbReference type="eggNOG" id="COG0257">
    <property type="taxonomic scope" value="Bacteria"/>
</dbReference>
<dbReference type="HOGENOM" id="CLU_135723_3_1_6"/>
<dbReference type="OrthoDB" id="9801558at2"/>
<dbReference type="Proteomes" id="UP000002514">
    <property type="component" value="Chromosome"/>
</dbReference>
<dbReference type="GO" id="GO:1990904">
    <property type="term" value="C:ribonucleoprotein complex"/>
    <property type="evidence" value="ECO:0007669"/>
    <property type="project" value="UniProtKB-KW"/>
</dbReference>
<dbReference type="GO" id="GO:0005840">
    <property type="term" value="C:ribosome"/>
    <property type="evidence" value="ECO:0007669"/>
    <property type="project" value="UniProtKB-KW"/>
</dbReference>
<dbReference type="GO" id="GO:0003735">
    <property type="term" value="F:structural constituent of ribosome"/>
    <property type="evidence" value="ECO:0007669"/>
    <property type="project" value="InterPro"/>
</dbReference>
<dbReference type="GO" id="GO:0006412">
    <property type="term" value="P:translation"/>
    <property type="evidence" value="ECO:0007669"/>
    <property type="project" value="UniProtKB-UniRule"/>
</dbReference>
<dbReference type="HAMAP" id="MF_00251">
    <property type="entry name" value="Ribosomal_bL36"/>
    <property type="match status" value="1"/>
</dbReference>
<dbReference type="InterPro" id="IPR000473">
    <property type="entry name" value="Ribosomal_bL36"/>
</dbReference>
<dbReference type="InterPro" id="IPR035977">
    <property type="entry name" value="Ribosomal_bL36_sp"/>
</dbReference>
<dbReference type="InterPro" id="IPR047621">
    <property type="entry name" value="Ribosomal_L36_bact"/>
</dbReference>
<dbReference type="NCBIfam" id="NF002021">
    <property type="entry name" value="PRK00831.1"/>
    <property type="match status" value="1"/>
</dbReference>
<dbReference type="NCBIfam" id="TIGR01022">
    <property type="entry name" value="rpmJ_bact"/>
    <property type="match status" value="1"/>
</dbReference>
<dbReference type="PANTHER" id="PTHR47781">
    <property type="entry name" value="50S RIBOSOMAL PROTEIN L36 2"/>
    <property type="match status" value="1"/>
</dbReference>
<dbReference type="PANTHER" id="PTHR47781:SF1">
    <property type="entry name" value="LARGE RIBOSOMAL SUBUNIT PROTEIN BL36B"/>
    <property type="match status" value="1"/>
</dbReference>
<dbReference type="Pfam" id="PF00444">
    <property type="entry name" value="Ribosomal_L36"/>
    <property type="match status" value="1"/>
</dbReference>
<dbReference type="SUPFAM" id="SSF57840">
    <property type="entry name" value="Ribosomal protein L36"/>
    <property type="match status" value="1"/>
</dbReference>
<dbReference type="PROSITE" id="PS00828">
    <property type="entry name" value="RIBOSOMAL_L36"/>
    <property type="match status" value="1"/>
</dbReference>
<sequence length="46" mass="5370">MQVLSSLKTAKTRHPDCKIVSRRGRLYVICKSNPRFKAVQGKKKRR</sequence>
<comment type="similarity">
    <text evidence="1">Belongs to the bacterial ribosomal protein bL36 family.</text>
</comment>
<proteinExistence type="inferred from homology"/>
<name>RL36_PHOLL</name>
<reference key="1">
    <citation type="journal article" date="2003" name="Nat. Biotechnol.">
        <title>The genome sequence of the entomopathogenic bacterium Photorhabdus luminescens.</title>
        <authorList>
            <person name="Duchaud E."/>
            <person name="Rusniok C."/>
            <person name="Frangeul L."/>
            <person name="Buchrieser C."/>
            <person name="Givaudan A."/>
            <person name="Taourit S."/>
            <person name="Bocs S."/>
            <person name="Boursaux-Eude C."/>
            <person name="Chandler M."/>
            <person name="Charles J.-F."/>
            <person name="Dassa E."/>
            <person name="Derose R."/>
            <person name="Derzelle S."/>
            <person name="Freyssinet G."/>
            <person name="Gaudriault S."/>
            <person name="Medigue C."/>
            <person name="Lanois A."/>
            <person name="Powell K."/>
            <person name="Siguier P."/>
            <person name="Vincent R."/>
            <person name="Wingate V."/>
            <person name="Zouine M."/>
            <person name="Glaser P."/>
            <person name="Boemare N."/>
            <person name="Danchin A."/>
            <person name="Kunst F."/>
        </authorList>
    </citation>
    <scope>NUCLEOTIDE SEQUENCE [LARGE SCALE GENOMIC DNA]</scope>
    <source>
        <strain>DSM 15139 / CIP 105565 / TT01</strain>
    </source>
</reference>
<organism>
    <name type="scientific">Photorhabdus laumondii subsp. laumondii (strain DSM 15139 / CIP 105565 / TT01)</name>
    <name type="common">Photorhabdus luminescens subsp. laumondii</name>
    <dbReference type="NCBI Taxonomy" id="243265"/>
    <lineage>
        <taxon>Bacteria</taxon>
        <taxon>Pseudomonadati</taxon>
        <taxon>Pseudomonadota</taxon>
        <taxon>Gammaproteobacteria</taxon>
        <taxon>Enterobacterales</taxon>
        <taxon>Morganellaceae</taxon>
        <taxon>Photorhabdus</taxon>
    </lineage>
</organism>
<gene>
    <name evidence="1" type="primary">rpmJ</name>
    <name type="ordered locus">plu0035</name>
</gene>
<evidence type="ECO:0000255" key="1">
    <source>
        <dbReference type="HAMAP-Rule" id="MF_00251"/>
    </source>
</evidence>
<evidence type="ECO:0000305" key="2"/>
<protein>
    <recommendedName>
        <fullName evidence="1">Large ribosomal subunit protein bL36</fullName>
    </recommendedName>
    <alternativeName>
        <fullName evidence="2">50S ribosomal protein L36</fullName>
    </alternativeName>
</protein>
<keyword id="KW-1185">Reference proteome</keyword>
<keyword id="KW-0687">Ribonucleoprotein</keyword>
<keyword id="KW-0689">Ribosomal protein</keyword>
<accession>Q7NA99</accession>